<gene>
    <name evidence="1" type="primary">ureA</name>
    <name type="ordered locus">UU434</name>
</gene>
<keyword id="KW-0963">Cytoplasm</keyword>
<keyword id="KW-0378">Hydrolase</keyword>
<keyword id="KW-1185">Reference proteome</keyword>
<name>URE3_UREPA</name>
<sequence length="101" mass="11219">MNLSLREVQKLLITVAADVARRRLARGLKLNYSEAVALITDHVMEGARDGKLVADLMQSAREVLRVDQVMEGVDTMVSIIQVEVTFPDGTKLVSVHDPIYK</sequence>
<dbReference type="EC" id="3.5.1.5" evidence="1"/>
<dbReference type="EMBL" id="L40489">
    <property type="protein sequence ID" value="AAA89187.1"/>
    <property type="molecule type" value="Genomic_DNA"/>
</dbReference>
<dbReference type="EMBL" id="AF085730">
    <property type="protein sequence ID" value="AAD28134.2"/>
    <property type="molecule type" value="Genomic_DNA"/>
</dbReference>
<dbReference type="EMBL" id="AF085731">
    <property type="protein sequence ID" value="AAD28137.2"/>
    <property type="molecule type" value="Genomic_DNA"/>
</dbReference>
<dbReference type="EMBL" id="AF085733">
    <property type="protein sequence ID" value="AAD28143.2"/>
    <property type="molecule type" value="Genomic_DNA"/>
</dbReference>
<dbReference type="EMBL" id="AF222894">
    <property type="protein sequence ID" value="AAF30846.1"/>
    <property type="molecule type" value="Genomic_DNA"/>
</dbReference>
<dbReference type="PIR" id="A82891">
    <property type="entry name" value="A82891"/>
</dbReference>
<dbReference type="RefSeq" id="WP_010891770.1">
    <property type="nucleotide sequence ID" value="NC_002162.1"/>
</dbReference>
<dbReference type="SMR" id="P0C7K9"/>
<dbReference type="STRING" id="273119.UU434"/>
<dbReference type="EnsemblBacteria" id="AAF30846">
    <property type="protein sequence ID" value="AAF30846"/>
    <property type="gene ID" value="UU434"/>
</dbReference>
<dbReference type="GeneID" id="29672370"/>
<dbReference type="KEGG" id="uur:UU434"/>
<dbReference type="PATRIC" id="fig|273119.6.peg.450"/>
<dbReference type="eggNOG" id="COG0831">
    <property type="taxonomic scope" value="Bacteria"/>
</dbReference>
<dbReference type="HOGENOM" id="CLU_145825_1_0_14"/>
<dbReference type="OrthoDB" id="9793527at2"/>
<dbReference type="UniPathway" id="UPA00258">
    <property type="reaction ID" value="UER00370"/>
</dbReference>
<dbReference type="Proteomes" id="UP000000423">
    <property type="component" value="Chromosome"/>
</dbReference>
<dbReference type="GO" id="GO:0005737">
    <property type="term" value="C:cytoplasm"/>
    <property type="evidence" value="ECO:0007669"/>
    <property type="project" value="UniProtKB-SubCell"/>
</dbReference>
<dbReference type="GO" id="GO:0016151">
    <property type="term" value="F:nickel cation binding"/>
    <property type="evidence" value="ECO:0007669"/>
    <property type="project" value="InterPro"/>
</dbReference>
<dbReference type="GO" id="GO:0009039">
    <property type="term" value="F:urease activity"/>
    <property type="evidence" value="ECO:0007669"/>
    <property type="project" value="UniProtKB-UniRule"/>
</dbReference>
<dbReference type="GO" id="GO:0043419">
    <property type="term" value="P:urea catabolic process"/>
    <property type="evidence" value="ECO:0007669"/>
    <property type="project" value="UniProtKB-UniRule"/>
</dbReference>
<dbReference type="CDD" id="cd00390">
    <property type="entry name" value="Urease_gamma"/>
    <property type="match status" value="1"/>
</dbReference>
<dbReference type="Gene3D" id="3.30.280.10">
    <property type="entry name" value="Urease, gamma-like subunit"/>
    <property type="match status" value="1"/>
</dbReference>
<dbReference type="HAMAP" id="MF_00739">
    <property type="entry name" value="Urease_gamma"/>
    <property type="match status" value="1"/>
</dbReference>
<dbReference type="InterPro" id="IPR012010">
    <property type="entry name" value="Urease_gamma"/>
</dbReference>
<dbReference type="InterPro" id="IPR002026">
    <property type="entry name" value="Urease_gamma/gamma-beta_su"/>
</dbReference>
<dbReference type="InterPro" id="IPR036463">
    <property type="entry name" value="Urease_gamma_sf"/>
</dbReference>
<dbReference type="InterPro" id="IPR050069">
    <property type="entry name" value="Urease_subunit"/>
</dbReference>
<dbReference type="NCBIfam" id="NF009712">
    <property type="entry name" value="PRK13241.1"/>
    <property type="match status" value="1"/>
</dbReference>
<dbReference type="NCBIfam" id="TIGR00193">
    <property type="entry name" value="urease_gam"/>
    <property type="match status" value="1"/>
</dbReference>
<dbReference type="PANTHER" id="PTHR33569">
    <property type="entry name" value="UREASE"/>
    <property type="match status" value="1"/>
</dbReference>
<dbReference type="PANTHER" id="PTHR33569:SF1">
    <property type="entry name" value="UREASE"/>
    <property type="match status" value="1"/>
</dbReference>
<dbReference type="Pfam" id="PF00547">
    <property type="entry name" value="Urease_gamma"/>
    <property type="match status" value="1"/>
</dbReference>
<dbReference type="PIRSF" id="PIRSF001223">
    <property type="entry name" value="Urease_gamma"/>
    <property type="match status" value="1"/>
</dbReference>
<dbReference type="SUPFAM" id="SSF54111">
    <property type="entry name" value="Urease, gamma-subunit"/>
    <property type="match status" value="1"/>
</dbReference>
<protein>
    <recommendedName>
        <fullName evidence="1">Urease subunit gamma</fullName>
        <ecNumber evidence="1">3.5.1.5</ecNumber>
    </recommendedName>
    <alternativeName>
        <fullName evidence="1">Urea amidohydrolase subunit gamma</fullName>
    </alternativeName>
</protein>
<organism>
    <name type="scientific">Ureaplasma parvum serovar 3 (strain ATCC 700970)</name>
    <dbReference type="NCBI Taxonomy" id="273119"/>
    <lineage>
        <taxon>Bacteria</taxon>
        <taxon>Bacillati</taxon>
        <taxon>Mycoplasmatota</taxon>
        <taxon>Mycoplasmoidales</taxon>
        <taxon>Mycoplasmoidaceae</taxon>
        <taxon>Ureaplasma</taxon>
    </lineage>
</organism>
<proteinExistence type="inferred from homology"/>
<comment type="catalytic activity">
    <reaction evidence="1">
        <text>urea + 2 H2O + H(+) = hydrogencarbonate + 2 NH4(+)</text>
        <dbReference type="Rhea" id="RHEA:20557"/>
        <dbReference type="ChEBI" id="CHEBI:15377"/>
        <dbReference type="ChEBI" id="CHEBI:15378"/>
        <dbReference type="ChEBI" id="CHEBI:16199"/>
        <dbReference type="ChEBI" id="CHEBI:17544"/>
        <dbReference type="ChEBI" id="CHEBI:28938"/>
        <dbReference type="EC" id="3.5.1.5"/>
    </reaction>
</comment>
<comment type="pathway">
    <text evidence="1">Nitrogen metabolism; urea degradation; CO(2) and NH(3) from urea (urease route): step 1/1.</text>
</comment>
<comment type="subunit">
    <text evidence="1">Heterotrimer of UreA (gamma), UreB (beta) and UreC (alpha) subunits. Three heterotrimers associate to form the active enzyme.</text>
</comment>
<comment type="subcellular location">
    <subcellularLocation>
        <location evidence="1">Cytoplasm</location>
    </subcellularLocation>
</comment>
<comment type="similarity">
    <text evidence="1">Belongs to the urease gamma subunit family.</text>
</comment>
<accession>P0C7K9</accession>
<accession>Q56557</accession>
<accession>Q9R2X4</accession>
<evidence type="ECO:0000255" key="1">
    <source>
        <dbReference type="HAMAP-Rule" id="MF_00739"/>
    </source>
</evidence>
<reference key="1">
    <citation type="journal article" date="1996" name="J. Bacteriol.">
        <title>Organization of Ureaplasma urealyticum urease gene cluster and expression in a suppressor strain of Escherichia coli.</title>
        <authorList>
            <person name="Neyrolles O."/>
            <person name="Ferris S."/>
            <person name="Behbahani N."/>
            <person name="Montagnier L."/>
            <person name="Blanchard A."/>
        </authorList>
    </citation>
    <scope>NUCLEOTIDE SEQUENCE [GENOMIC DNA]</scope>
    <source>
        <strain>ATCC 27813 / 7 / Serovar 1</strain>
    </source>
</reference>
<reference key="2">
    <citation type="journal article" date="1996" name="J. Bacteriol.">
        <authorList>
            <person name="Neyrolles O."/>
            <person name="Ferris S."/>
            <person name="Behbahani N."/>
            <person name="Montagnier L."/>
            <person name="Blanchard A."/>
        </authorList>
    </citation>
    <scope>ERRATUM OF PUBMED:8550495</scope>
</reference>
<reference key="3">
    <citation type="journal article" date="1999" name="Int. J. Syst. Bacteriol.">
        <title>Phylogenetic analysis of Ureaplasma urealyticum -- support for the establishment of a new species, Ureaplasma parvum.</title>
        <authorList>
            <person name="Kong F."/>
            <person name="James G."/>
            <person name="Ma Z."/>
            <person name="Gordon S."/>
            <person name="Wang B."/>
            <person name="Gilbert G.L."/>
        </authorList>
    </citation>
    <scope>NUCLEOTIDE SEQUENCE [GENOMIC DNA]</scope>
    <source>
        <strain>ATCC 27813 / 7 / Serovar 1</strain>
        <strain>ATCC 27818 / Pi / Serovar 6</strain>
        <strain>ATCC 33697 / U26 / Serovar 14</strain>
    </source>
</reference>
<reference key="4">
    <citation type="journal article" date="2000" name="Nature">
        <title>The complete sequence of the mucosal pathogen Ureaplasma urealyticum.</title>
        <authorList>
            <person name="Glass J.I."/>
            <person name="Lefkowitz E.J."/>
            <person name="Glass J.S."/>
            <person name="Heiner C.R."/>
            <person name="Chen E.Y."/>
            <person name="Cassell G.H."/>
        </authorList>
    </citation>
    <scope>NUCLEOTIDE SEQUENCE [LARGE SCALE GENOMIC DNA]</scope>
    <source>
        <strain>ATCC 700970</strain>
    </source>
</reference>
<feature type="chain" id="PRO_0000098056" description="Urease subunit gamma">
    <location>
        <begin position="1"/>
        <end position="101"/>
    </location>
</feature>